<gene>
    <name type="primary">rssA</name>
</gene>
<name>RSSA_SERMA</name>
<proteinExistence type="evidence at protein level"/>
<reference key="1">
    <citation type="journal article" date="2005" name="J. Bacteriol.">
        <title>The RssAB two-component signal transduction system in Serratia marcescens regulates swarming motility and cell envelope architecture in response to exogenous saturated fatty acids.</title>
        <authorList>
            <person name="Lai H.-C."/>
            <person name="Soo P.-C."/>
            <person name="Wei J.-R."/>
            <person name="Yi W.-C."/>
            <person name="Liaw S.-J."/>
            <person name="Horng Y.-T."/>
            <person name="Lin S.-M."/>
            <person name="Ho S.-W."/>
            <person name="Swift S."/>
            <person name="Williams P."/>
        </authorList>
    </citation>
    <scope>NUCLEOTIDE SEQUENCE [GENOMIC DNA]</scope>
    <scope>FUNCTION</scope>
    <source>
        <strain>CH10</strain>
    </source>
</reference>
<reference key="2">
    <citation type="journal article" date="2005" name="J. Bacteriol.">
        <title>Biochemical characterization of RssA-RssB, a two-component signal transduction system regulating swarming behavior in Serratia marcescens.</title>
        <authorList>
            <person name="Wei J.-R."/>
            <person name="Tsai Y.-H."/>
            <person name="Soo P.-C."/>
            <person name="Horng Y.-T."/>
            <person name="Hsieh S.-C."/>
            <person name="Ho S.-W."/>
            <person name="Lai H.-C."/>
        </authorList>
    </citation>
    <scope>PROMOTER BINDING STUDIES</scope>
    <scope>PHOSPHORYLATION AT HIS-248</scope>
    <scope>MUTAGENESIS OF HIS-248</scope>
    <scope>DISRUPTION PHENOTYPE</scope>
    <source>
        <strain>CH1</strain>
    </source>
</reference>
<comment type="function">
    <text evidence="3">Member of the two-component regulatory system RssA/RssB involved in regulation of swarming motility which has been shown to be inhibited by saturated fatty acids. RssA/RssB regulates cellular fatty acid composition, hemolysin production and cell surface topography. RssA/RssB negatively regulates the activity of SlhBA. It can also act as a negative regulator for the control of the swarming initiation.</text>
</comment>
<comment type="catalytic activity">
    <reaction>
        <text>ATP + protein L-histidine = ADP + protein N-phospho-L-histidine.</text>
        <dbReference type="EC" id="2.7.13.3"/>
    </reaction>
</comment>
<comment type="subcellular location">
    <subcellularLocation>
        <location evidence="5">Cell inner membrane</location>
        <topology evidence="5">Multi-pass membrane protein</topology>
    </subcellularLocation>
</comment>
<comment type="disruption phenotype">
    <text evidence="4">Mutation in either rssA or rssB confers a precocious-swarming phenotype on LB agar: swarming occurs at 37 degrees Celsius and is initiated at a lower cell density and more rapidly than the swarming of the parent strain at 30 degrees Celsius. Both mutants also exhibit increased hemolysin activity and altered cell surface topology.</text>
</comment>
<sequence length="469" mass="52830">MIGFKSFFMRTIIFQVLAILLLWGLLVAWVKYWYYPDMEKYFDNQQRIVAAGIANILDETGTDNIDYRGIIKTIEGMYIDSINNGMQDEIDYHPLFVVYDRDNRVLYSSQTQGEPLRLPPSVLSGSVNYAGANWHLAGSWKEKRQYRVIVGESFNDRTTLFGNPADVPLLGILAAIIVTLLFTAYFSLRPLRQIARTISDRQPGNLSPINVSEQYQEIRPVVMEVNKLMARIDAANQREKRFMADAAHELRTPIAAVLAQLHLLTQVTEQQERREIIGDMQQGLDRAASLSRQLINLAKLEAEDFPLKIEAVDIYAEIGKCIAQHVPYALEKDVELSLDGSEDVVVSTDRRALIAIFTNLLDNALKYAPPGSRIEANIRSLAPLGCYITLRDNGPGVSEEHRSRLFERFYRVPGTQQTGSGLGLAIARNLADKIGAQLRVTEGLDDRGIGFIIDLPESYRPQTESEPRP</sequence>
<protein>
    <recommendedName>
        <fullName>Swarming motility regulation sensor protein RssA</fullName>
        <ecNumber>2.7.13.3</ecNumber>
    </recommendedName>
</protein>
<keyword id="KW-0067">ATP-binding</keyword>
<keyword id="KW-0997">Cell inner membrane</keyword>
<keyword id="KW-1003">Cell membrane</keyword>
<keyword id="KW-0418">Kinase</keyword>
<keyword id="KW-0472">Membrane</keyword>
<keyword id="KW-0547">Nucleotide-binding</keyword>
<keyword id="KW-0597">Phosphoprotein</keyword>
<keyword id="KW-0808">Transferase</keyword>
<keyword id="KW-0812">Transmembrane</keyword>
<keyword id="KW-1133">Transmembrane helix</keyword>
<keyword id="KW-0902">Two-component regulatory system</keyword>
<organism>
    <name type="scientific">Serratia marcescens</name>
    <dbReference type="NCBI Taxonomy" id="615"/>
    <lineage>
        <taxon>Bacteria</taxon>
        <taxon>Pseudomonadati</taxon>
        <taxon>Pseudomonadota</taxon>
        <taxon>Gammaproteobacteria</taxon>
        <taxon>Enterobacterales</taxon>
        <taxon>Yersiniaceae</taxon>
        <taxon>Serratia</taxon>
    </lineage>
</organism>
<dbReference type="EC" id="2.7.13.3"/>
<dbReference type="EMBL" id="AF465237">
    <property type="protein sequence ID" value="AAN28325.2"/>
    <property type="molecule type" value="Genomic_DNA"/>
</dbReference>
<dbReference type="SMR" id="Q8GP19"/>
<dbReference type="STRING" id="273526.SMDB11_3307"/>
<dbReference type="iPTMnet" id="Q8GP19"/>
<dbReference type="GO" id="GO:0005886">
    <property type="term" value="C:plasma membrane"/>
    <property type="evidence" value="ECO:0007669"/>
    <property type="project" value="UniProtKB-SubCell"/>
</dbReference>
<dbReference type="GO" id="GO:0005524">
    <property type="term" value="F:ATP binding"/>
    <property type="evidence" value="ECO:0007669"/>
    <property type="project" value="UniProtKB-KW"/>
</dbReference>
<dbReference type="GO" id="GO:0000155">
    <property type="term" value="F:phosphorelay sensor kinase activity"/>
    <property type="evidence" value="ECO:0007669"/>
    <property type="project" value="InterPro"/>
</dbReference>
<dbReference type="CDD" id="cd00075">
    <property type="entry name" value="HATPase"/>
    <property type="match status" value="1"/>
</dbReference>
<dbReference type="CDD" id="cd00082">
    <property type="entry name" value="HisKA"/>
    <property type="match status" value="1"/>
</dbReference>
<dbReference type="Gene3D" id="1.10.287.130">
    <property type="match status" value="1"/>
</dbReference>
<dbReference type="Gene3D" id="3.30.565.10">
    <property type="entry name" value="Histidine kinase-like ATPase, C-terminal domain"/>
    <property type="match status" value="1"/>
</dbReference>
<dbReference type="InterPro" id="IPR036890">
    <property type="entry name" value="HATPase_C_sf"/>
</dbReference>
<dbReference type="InterPro" id="IPR005467">
    <property type="entry name" value="His_kinase_dom"/>
</dbReference>
<dbReference type="InterPro" id="IPR003661">
    <property type="entry name" value="HisK_dim/P_dom"/>
</dbReference>
<dbReference type="InterPro" id="IPR036097">
    <property type="entry name" value="HisK_dim/P_sf"/>
</dbReference>
<dbReference type="InterPro" id="IPR004358">
    <property type="entry name" value="Sig_transdc_His_kin-like_C"/>
</dbReference>
<dbReference type="InterPro" id="IPR050428">
    <property type="entry name" value="TCS_sensor_his_kinase"/>
</dbReference>
<dbReference type="PANTHER" id="PTHR45436:SF15">
    <property type="entry name" value="SENSOR HISTIDINE KINASE CUSS"/>
    <property type="match status" value="1"/>
</dbReference>
<dbReference type="PANTHER" id="PTHR45436">
    <property type="entry name" value="SENSOR HISTIDINE KINASE YKOH"/>
    <property type="match status" value="1"/>
</dbReference>
<dbReference type="Pfam" id="PF02518">
    <property type="entry name" value="HATPase_c"/>
    <property type="match status" value="1"/>
</dbReference>
<dbReference type="Pfam" id="PF00512">
    <property type="entry name" value="HisKA"/>
    <property type="match status" value="1"/>
</dbReference>
<dbReference type="PRINTS" id="PR00344">
    <property type="entry name" value="BCTRLSENSOR"/>
</dbReference>
<dbReference type="SMART" id="SM00387">
    <property type="entry name" value="HATPase_c"/>
    <property type="match status" value="1"/>
</dbReference>
<dbReference type="SMART" id="SM00388">
    <property type="entry name" value="HisKA"/>
    <property type="match status" value="1"/>
</dbReference>
<dbReference type="SUPFAM" id="SSF55874">
    <property type="entry name" value="ATPase domain of HSP90 chaperone/DNA topoisomerase II/histidine kinase"/>
    <property type="match status" value="1"/>
</dbReference>
<dbReference type="SUPFAM" id="SSF47384">
    <property type="entry name" value="Homodimeric domain of signal transducing histidine kinase"/>
    <property type="match status" value="1"/>
</dbReference>
<dbReference type="PROSITE" id="PS50109">
    <property type="entry name" value="HIS_KIN"/>
    <property type="match status" value="1"/>
</dbReference>
<feature type="chain" id="PRO_0000074865" description="Swarming motility regulation sensor protein RssA">
    <location>
        <begin position="1"/>
        <end position="469"/>
    </location>
</feature>
<feature type="transmembrane region" description="Helical" evidence="1">
    <location>
        <begin position="12"/>
        <end position="32"/>
    </location>
</feature>
<feature type="transmembrane region" description="Helical" evidence="1">
    <location>
        <begin position="167"/>
        <end position="187"/>
    </location>
</feature>
<feature type="domain" description="Histidine kinase" evidence="2">
    <location>
        <begin position="245"/>
        <end position="459"/>
    </location>
</feature>
<feature type="modified residue" description="Phosphohistidine; by autocatalysis" evidence="2 4">
    <location>
        <position position="248"/>
    </location>
</feature>
<feature type="mutagenesis site" description="No autophosphorylation." evidence="4">
    <original>H</original>
    <variation>A</variation>
    <location>
        <position position="248"/>
    </location>
</feature>
<evidence type="ECO:0000255" key="1"/>
<evidence type="ECO:0000255" key="2">
    <source>
        <dbReference type="PROSITE-ProRule" id="PRU00107"/>
    </source>
</evidence>
<evidence type="ECO:0000269" key="3">
    <source>
    </source>
</evidence>
<evidence type="ECO:0000269" key="4">
    <source>
    </source>
</evidence>
<evidence type="ECO:0000305" key="5"/>
<accession>Q8GP19</accession>